<feature type="chain" id="PRO_0000049389" description="Zinc fingers and homeoboxes protein 1">
    <location>
        <begin position="1"/>
        <end position="873"/>
    </location>
</feature>
<feature type="zinc finger region" description="C2H2-type 1" evidence="3 9">
    <location>
        <begin position="70"/>
        <end position="93"/>
    </location>
</feature>
<feature type="zinc finger region" description="C2H2-type 2" evidence="3 9">
    <location>
        <begin position="102"/>
        <end position="125"/>
    </location>
</feature>
<feature type="DNA-binding region" description="Homeobox 1" evidence="4 9">
    <location>
        <begin position="284"/>
        <end position="346"/>
    </location>
</feature>
<feature type="DNA-binding region" description="Homeobox 2" evidence="4 9">
    <location>
        <begin position="464"/>
        <end position="526"/>
    </location>
</feature>
<feature type="DNA-binding region" description="Homeobox 3" evidence="4 9">
    <location>
        <begin position="569"/>
        <end position="630"/>
    </location>
</feature>
<feature type="DNA-binding region" description="Homeobox 4" evidence="4 9">
    <location>
        <begin position="660"/>
        <end position="722"/>
    </location>
</feature>
<feature type="DNA-binding region" description="Homeobox 5" evidence="4 9">
    <location>
        <begin position="777"/>
        <end position="832"/>
    </location>
</feature>
<feature type="region of interest" description="Disordered" evidence="5">
    <location>
        <begin position="41"/>
        <end position="63"/>
    </location>
</feature>
<feature type="region of interest" description="Disordered" evidence="5">
    <location>
        <begin position="198"/>
        <end position="247"/>
    </location>
</feature>
<feature type="region of interest" description="Required for interaction with NFYA" evidence="1">
    <location>
        <begin position="272"/>
        <end position="564"/>
    </location>
</feature>
<feature type="region of interest" description="Required for dimerization" evidence="1">
    <location>
        <begin position="272"/>
        <end position="432"/>
    </location>
</feature>
<feature type="region of interest" description="Disordered" evidence="5">
    <location>
        <begin position="429"/>
        <end position="456"/>
    </location>
</feature>
<feature type="region of interest" description="Disordered" evidence="5">
    <location>
        <begin position="541"/>
        <end position="568"/>
    </location>
</feature>
<feature type="region of interest" description="Disordered" evidence="5">
    <location>
        <begin position="627"/>
        <end position="668"/>
    </location>
</feature>
<feature type="region of interest" description="Disordered" evidence="5">
    <location>
        <begin position="731"/>
        <end position="767"/>
    </location>
</feature>
<feature type="region of interest" description="Required for nuclear localization" evidence="1">
    <location>
        <begin position="734"/>
        <end position="768"/>
    </location>
</feature>
<feature type="region of interest" description="Disordered" evidence="5">
    <location>
        <begin position="829"/>
        <end position="873"/>
    </location>
</feature>
<feature type="region of interest" description="Required for repressor activity" evidence="1">
    <location>
        <begin position="831"/>
        <end position="873"/>
    </location>
</feature>
<feature type="compositionally biased region" description="Basic and acidic residues" evidence="5">
    <location>
        <begin position="50"/>
        <end position="63"/>
    </location>
</feature>
<feature type="compositionally biased region" description="Low complexity" evidence="5">
    <location>
        <begin position="223"/>
        <end position="238"/>
    </location>
</feature>
<feature type="compositionally biased region" description="Basic residues" evidence="5">
    <location>
        <begin position="740"/>
        <end position="764"/>
    </location>
</feature>
<feature type="compositionally biased region" description="Acidic residues" evidence="5">
    <location>
        <begin position="831"/>
        <end position="857"/>
    </location>
</feature>
<feature type="compositionally biased region" description="Basic residues" evidence="5">
    <location>
        <begin position="863"/>
        <end position="873"/>
    </location>
</feature>
<feature type="modified residue" description="Phosphothreonine" evidence="2">
    <location>
        <position position="36"/>
    </location>
</feature>
<feature type="modified residue" description="Phosphoserine" evidence="13">
    <location>
        <position position="45"/>
    </location>
</feature>
<feature type="modified residue" description="Phosphoserine" evidence="13 14">
    <location>
        <position position="47"/>
    </location>
</feature>
<feature type="modified residue" description="Phosphoserine" evidence="13 14">
    <location>
        <position position="48"/>
    </location>
</feature>
<feature type="modified residue" description="Phosphoserine" evidence="2">
    <location>
        <position position="202"/>
    </location>
</feature>
<feature type="modified residue" description="Phosphoserine" evidence="14">
    <location>
        <position position="648"/>
    </location>
</feature>
<feature type="modified residue" description="Phosphoserine" evidence="2">
    <location>
        <position position="774"/>
    </location>
</feature>
<feature type="cross-link" description="Glycyl lysine isopeptide (Lys-Gly) (interchain with G-Cter in SUMO2)" evidence="2">
    <location>
        <position position="159"/>
    </location>
</feature>
<feature type="cross-link" description="Glycyl lysine isopeptide (Lys-Gly) (interchain with G-Cter in SUMO2)" evidence="2">
    <location>
        <position position="441"/>
    </location>
</feature>
<feature type="cross-link" description="Glycyl lysine isopeptide (Lys-Gly) (interchain with G-Cter in SUMO2)" evidence="2">
    <location>
        <position position="485"/>
    </location>
</feature>
<feature type="cross-link" description="Glycyl lysine isopeptide (Lys-Gly) (interchain with G-Cter in SUMO2)" evidence="2">
    <location>
        <position position="629"/>
    </location>
</feature>
<feature type="sequence conflict" description="In Ref. 1 and 2." evidence="9" ref="1 2">
    <original>S</original>
    <variation>T</variation>
    <location>
        <position position="375"/>
    </location>
</feature>
<feature type="sequence conflict" description="In Ref. 3; BAC34629." evidence="9" ref="3">
    <original>C</original>
    <variation>Y</variation>
    <location>
        <position position="388"/>
    </location>
</feature>
<feature type="sequence conflict" description="In Ref. 1; CAA90905." evidence="9" ref="1">
    <original>A</original>
    <variation>R</variation>
    <location>
        <position position="553"/>
    </location>
</feature>
<feature type="sequence conflict" description="In Ref. 1; CAA90905." evidence="9" ref="1">
    <original>KL</original>
    <variation>NV</variation>
    <location>
        <begin position="867"/>
        <end position="868"/>
    </location>
</feature>
<organism evidence="12">
    <name type="scientific">Mus musculus</name>
    <name type="common">Mouse</name>
    <dbReference type="NCBI Taxonomy" id="10090"/>
    <lineage>
        <taxon>Eukaryota</taxon>
        <taxon>Metazoa</taxon>
        <taxon>Chordata</taxon>
        <taxon>Craniata</taxon>
        <taxon>Vertebrata</taxon>
        <taxon>Euteleostomi</taxon>
        <taxon>Mammalia</taxon>
        <taxon>Eutheria</taxon>
        <taxon>Euarchontoglires</taxon>
        <taxon>Glires</taxon>
        <taxon>Rodentia</taxon>
        <taxon>Myomorpha</taxon>
        <taxon>Muroidea</taxon>
        <taxon>Muridae</taxon>
        <taxon>Murinae</taxon>
        <taxon>Mus</taxon>
        <taxon>Mus</taxon>
    </lineage>
</organism>
<comment type="function">
    <text evidence="1">Acts as a transcriptional repressor. Increases DNMT3B-mediated repressive transcriptional activity when DNMT3B is tethered to DNA. May link molecule between DNMT3B and other co-repressor proteins (By similarity).</text>
</comment>
<comment type="subunit">
    <text evidence="1">Forms homodimers. Heterodimer (via HD1 domain) with ZHX2 (via HD1 domain). Also forms a heterodimer with ZHX3 which is a prerequisite for repressor activity. Interacts with ATF7IP and NFYA. Interacts (via homeobox domains) with DNMT3B (via PWWP domain) (By similarity).</text>
</comment>
<comment type="subcellular location">
    <subcellularLocation>
        <location evidence="4 7">Nucleus</location>
    </subcellularLocation>
    <text evidence="1">Colocalized in the nucleus with DNMT3B.</text>
</comment>
<comment type="tissue specificity">
    <text evidence="8">Widely expressed with highest levels in brain.</text>
</comment>
<comment type="induction">
    <text evidence="6">By interleukin-2.</text>
</comment>
<comment type="similarity">
    <text evidence="9">Belongs to the ZHX family.</text>
</comment>
<sequence>MASRRKSTTPCMVLASEQDPDLELISDLDEGPPILTPVENAKAESVSSDEEVHGSVDSDNQQNKKVEGGYECKYCTFQTPDLNMFTFHVDSEHPNVVLNSSYVCVECNFLTKRYDALSEHNLKYHPGEENFKLTMVKRNNQTIFEQTINDLTFDGSFVKEENTEQGESIDVSSSGISISKTPIMKMMKNKVENKRITVHHNSAEGTSEEKENGVKASQEENAESVSSSALESNTSTSTINRVHPSPASTVVTPTAVLPGLAQVITAVSAQQNSNLLPKVLIPVNSIPTYNAALDNNPLLLNTYNKFPYPTMSEITVLSAQAKYTEEQIKIWFSAQRLKHGVSWTPEEVEEARRKQFNGTVHTVPQTITVIPTHISTGSNGLPSILQTCQIVGQPGLVLTQVAGTNTLPVTAPIALTVAGVPNQTNVQKSQVPAAQPATDTKPATAAVPSSPSVRPEAALVNPDSFGIRAKKTKEQLAELKVSYLKNQFPHDSEIIRLMKITGLTKGEIKKWFSDTRYNQRNSKSNQCLHLNNDSSATIIIDSSDETPEPPAAAASQQKQSWNPFPDFAPQKFKEKTAEQLRALQASFLNSSVLTDEEVNRLRAQTKLTRREIDAWFTEKNKTKALKDEKIEVDESNVGSSKEEPGESSPGDETVAPKSGGTGKICKKTPEQLHMLKSAFVRTQWPSAEEYDKLAEESGLARTDIVSWFGDTRYAWKNGNLKWYYYYQSSNSSSLNGLSSLRRRGRGRPKGRGRGRPRGRPRGGKRMNTWDRVPSLIKFKTGTAILKDYYLKHKFLNEQDLDELVNRSHMGYEQVREWFAERQRRSELGIELFEENEEEDEVVDDQEEDEEETDDSDTWEPPRHVKRKLSKSDD</sequence>
<proteinExistence type="evidence at protein level"/>
<protein>
    <recommendedName>
        <fullName>Zinc fingers and homeoboxes protein 1</fullName>
    </recommendedName>
</protein>
<dbReference type="EMBL" id="Z54200">
    <property type="protein sequence ID" value="CAA90905.1"/>
    <property type="molecule type" value="mRNA"/>
</dbReference>
<dbReference type="EMBL" id="AB078421">
    <property type="protein sequence ID" value="BAC22110.1"/>
    <property type="molecule type" value="Genomic_DNA"/>
</dbReference>
<dbReference type="EMBL" id="AK051410">
    <property type="protein sequence ID" value="BAC34629.1"/>
    <property type="molecule type" value="mRNA"/>
</dbReference>
<dbReference type="EMBL" id="AK053191">
    <property type="protein sequence ID" value="BAC35306.1"/>
    <property type="molecule type" value="mRNA"/>
</dbReference>
<dbReference type="EMBL" id="BC054543">
    <property type="protein sequence ID" value="AAH54543.1"/>
    <property type="molecule type" value="mRNA"/>
</dbReference>
<dbReference type="CCDS" id="CCDS27488.1"/>
<dbReference type="PIR" id="JC4863">
    <property type="entry name" value="JC4863"/>
</dbReference>
<dbReference type="RefSeq" id="NP_001035903.1">
    <property type="nucleotide sequence ID" value="NM_001042438.2"/>
</dbReference>
<dbReference type="RefSeq" id="NP_033598.2">
    <property type="nucleotide sequence ID" value="NM_009572.4"/>
</dbReference>
<dbReference type="SMR" id="P70121"/>
<dbReference type="BioGRID" id="204693">
    <property type="interactions" value="1"/>
</dbReference>
<dbReference type="FunCoup" id="P70121">
    <property type="interactions" value="3412"/>
</dbReference>
<dbReference type="IntAct" id="P70121">
    <property type="interactions" value="1"/>
</dbReference>
<dbReference type="MINT" id="P70121"/>
<dbReference type="STRING" id="10090.ENSMUSP00000105797"/>
<dbReference type="GlyGen" id="P70121">
    <property type="glycosylation" value="1 site, 1 O-linked glycan (1 site)"/>
</dbReference>
<dbReference type="iPTMnet" id="P70121"/>
<dbReference type="PhosphoSitePlus" id="P70121"/>
<dbReference type="jPOST" id="P70121"/>
<dbReference type="PaxDb" id="10090-ENSMUSP00000066201"/>
<dbReference type="PeptideAtlas" id="P70121"/>
<dbReference type="ProteomicsDB" id="302059"/>
<dbReference type="Pumba" id="P70121"/>
<dbReference type="Antibodypedia" id="26954">
    <property type="antibodies" value="168 antibodies from 22 providers"/>
</dbReference>
<dbReference type="DNASU" id="22770"/>
<dbReference type="Ensembl" id="ENSMUST00000070143.13">
    <property type="protein sequence ID" value="ENSMUSP00000066201.7"/>
    <property type="gene ID" value="ENSMUSG00000022361.15"/>
</dbReference>
<dbReference type="Ensembl" id="ENSMUST00000110168.8">
    <property type="protein sequence ID" value="ENSMUSP00000105797.2"/>
    <property type="gene ID" value="ENSMUSG00000022361.15"/>
</dbReference>
<dbReference type="Ensembl" id="ENSMUST00000175805.9">
    <property type="protein sequence ID" value="ENSMUSP00000134844.2"/>
    <property type="gene ID" value="ENSMUSG00000022361.15"/>
</dbReference>
<dbReference type="GeneID" id="22770"/>
<dbReference type="KEGG" id="mmu:22770"/>
<dbReference type="UCSC" id="uc007vtd.2">
    <property type="organism name" value="mouse"/>
</dbReference>
<dbReference type="AGR" id="MGI:109271"/>
<dbReference type="CTD" id="11244"/>
<dbReference type="MGI" id="MGI:109271">
    <property type="gene designation" value="Zhx1"/>
</dbReference>
<dbReference type="VEuPathDB" id="HostDB:ENSMUSG00000022361"/>
<dbReference type="eggNOG" id="ENOG502QT3D">
    <property type="taxonomic scope" value="Eukaryota"/>
</dbReference>
<dbReference type="GeneTree" id="ENSGT00950000182893"/>
<dbReference type="InParanoid" id="P70121"/>
<dbReference type="OMA" id="SSWGTFP"/>
<dbReference type="OrthoDB" id="6159439at2759"/>
<dbReference type="PhylomeDB" id="P70121"/>
<dbReference type="TreeFam" id="TF333363"/>
<dbReference type="BioGRID-ORCS" id="22770">
    <property type="hits" value="2 hits in 81 CRISPR screens"/>
</dbReference>
<dbReference type="ChiTaRS" id="Zhx1">
    <property type="organism name" value="mouse"/>
</dbReference>
<dbReference type="PRO" id="PR:P70121"/>
<dbReference type="Proteomes" id="UP000000589">
    <property type="component" value="Chromosome 15"/>
</dbReference>
<dbReference type="RNAct" id="P70121">
    <property type="molecule type" value="protein"/>
</dbReference>
<dbReference type="Bgee" id="ENSMUSG00000022361">
    <property type="expression patterns" value="Expressed in undifferentiated genital tubercle and 77 other cell types or tissues"/>
</dbReference>
<dbReference type="ExpressionAtlas" id="P70121">
    <property type="expression patterns" value="baseline and differential"/>
</dbReference>
<dbReference type="GO" id="GO:0005654">
    <property type="term" value="C:nucleoplasm"/>
    <property type="evidence" value="ECO:0007669"/>
    <property type="project" value="Ensembl"/>
</dbReference>
<dbReference type="GO" id="GO:0005634">
    <property type="term" value="C:nucleus"/>
    <property type="evidence" value="ECO:0000314"/>
    <property type="project" value="GO_Central"/>
</dbReference>
<dbReference type="GO" id="GO:0003677">
    <property type="term" value="F:DNA binding"/>
    <property type="evidence" value="ECO:0007669"/>
    <property type="project" value="UniProtKB-KW"/>
</dbReference>
<dbReference type="GO" id="GO:0003700">
    <property type="term" value="F:DNA-binding transcription factor activity"/>
    <property type="evidence" value="ECO:0007669"/>
    <property type="project" value="Ensembl"/>
</dbReference>
<dbReference type="GO" id="GO:0046982">
    <property type="term" value="F:protein heterodimerization activity"/>
    <property type="evidence" value="ECO:0000250"/>
    <property type="project" value="UniProtKB"/>
</dbReference>
<dbReference type="GO" id="GO:0008270">
    <property type="term" value="F:zinc ion binding"/>
    <property type="evidence" value="ECO:0007669"/>
    <property type="project" value="UniProtKB-KW"/>
</dbReference>
<dbReference type="GO" id="GO:0045892">
    <property type="term" value="P:negative regulation of DNA-templated transcription"/>
    <property type="evidence" value="ECO:0000250"/>
    <property type="project" value="UniProtKB"/>
</dbReference>
<dbReference type="GO" id="GO:0000122">
    <property type="term" value="P:negative regulation of transcription by RNA polymerase II"/>
    <property type="evidence" value="ECO:0000250"/>
    <property type="project" value="UniProtKB"/>
</dbReference>
<dbReference type="CDD" id="cd00086">
    <property type="entry name" value="homeodomain"/>
    <property type="match status" value="5"/>
</dbReference>
<dbReference type="FunFam" id="1.10.10.60:FF:000262">
    <property type="entry name" value="Zinc fingers and homeoboxes 1"/>
    <property type="match status" value="1"/>
</dbReference>
<dbReference type="FunFam" id="1.10.10.60:FF:000235">
    <property type="entry name" value="Zinc fingers and homeoboxes protein 1"/>
    <property type="match status" value="1"/>
</dbReference>
<dbReference type="FunFam" id="1.10.10.60:FF:000240">
    <property type="entry name" value="Zinc fingers and homeoboxes protein 1"/>
    <property type="match status" value="1"/>
</dbReference>
<dbReference type="FunFam" id="3.30.160.60:FF:000296">
    <property type="entry name" value="Zinc fingers and homeoboxes protein 1"/>
    <property type="match status" value="1"/>
</dbReference>
<dbReference type="FunFam" id="1.10.10.60:FF:000237">
    <property type="entry name" value="zinc fingers and homeoboxes protein 1"/>
    <property type="match status" value="1"/>
</dbReference>
<dbReference type="FunFam" id="1.10.10.60:FF:000133">
    <property type="entry name" value="zinc fingers and homeoboxes protein 3"/>
    <property type="match status" value="1"/>
</dbReference>
<dbReference type="Gene3D" id="3.30.160.60">
    <property type="entry name" value="Classic Zinc Finger"/>
    <property type="match status" value="1"/>
</dbReference>
<dbReference type="Gene3D" id="1.10.10.60">
    <property type="entry name" value="Homeodomain-like"/>
    <property type="match status" value="5"/>
</dbReference>
<dbReference type="InterPro" id="IPR001356">
    <property type="entry name" value="HD"/>
</dbReference>
<dbReference type="InterPro" id="IPR009057">
    <property type="entry name" value="Homeodomain-like_sf"/>
</dbReference>
<dbReference type="InterPro" id="IPR024578">
    <property type="entry name" value="Homez_homeobox_dom"/>
</dbReference>
<dbReference type="InterPro" id="IPR041057">
    <property type="entry name" value="ZHX_Znf_C2H2"/>
</dbReference>
<dbReference type="InterPro" id="IPR036236">
    <property type="entry name" value="Znf_C2H2_sf"/>
</dbReference>
<dbReference type="InterPro" id="IPR013087">
    <property type="entry name" value="Znf_C2H2_type"/>
</dbReference>
<dbReference type="PANTHER" id="PTHR15467:SF4">
    <property type="entry name" value="ZINC FINGERS AND HOMEOBOXES PROTEIN 1"/>
    <property type="match status" value="1"/>
</dbReference>
<dbReference type="PANTHER" id="PTHR15467">
    <property type="entry name" value="ZINC-FINGERS AND HOMEOBOXES RELATED"/>
    <property type="match status" value="1"/>
</dbReference>
<dbReference type="Pfam" id="PF00046">
    <property type="entry name" value="Homeodomain"/>
    <property type="match status" value="4"/>
</dbReference>
<dbReference type="Pfam" id="PF11569">
    <property type="entry name" value="Homez"/>
    <property type="match status" value="1"/>
</dbReference>
<dbReference type="Pfam" id="PF18387">
    <property type="entry name" value="zf_C2H2_ZHX"/>
    <property type="match status" value="1"/>
</dbReference>
<dbReference type="SMART" id="SM00389">
    <property type="entry name" value="HOX"/>
    <property type="match status" value="5"/>
</dbReference>
<dbReference type="SMART" id="SM00355">
    <property type="entry name" value="ZnF_C2H2"/>
    <property type="match status" value="2"/>
</dbReference>
<dbReference type="SUPFAM" id="SSF57667">
    <property type="entry name" value="beta-beta-alpha zinc fingers"/>
    <property type="match status" value="2"/>
</dbReference>
<dbReference type="SUPFAM" id="SSF46689">
    <property type="entry name" value="Homeodomain-like"/>
    <property type="match status" value="5"/>
</dbReference>
<dbReference type="PROSITE" id="PS50071">
    <property type="entry name" value="HOMEOBOX_2"/>
    <property type="match status" value="4"/>
</dbReference>
<dbReference type="PROSITE" id="PS50157">
    <property type="entry name" value="ZINC_FINGER_C2H2_2"/>
    <property type="match status" value="1"/>
</dbReference>
<evidence type="ECO:0000250" key="1"/>
<evidence type="ECO:0000250" key="2">
    <source>
        <dbReference type="UniProtKB" id="Q9UKY1"/>
    </source>
</evidence>
<evidence type="ECO:0000255" key="3">
    <source>
        <dbReference type="PROSITE-ProRule" id="PRU00042"/>
    </source>
</evidence>
<evidence type="ECO:0000255" key="4">
    <source>
        <dbReference type="PROSITE-ProRule" id="PRU00108"/>
    </source>
</evidence>
<evidence type="ECO:0000256" key="5">
    <source>
        <dbReference type="SAM" id="MobiDB-lite"/>
    </source>
</evidence>
<evidence type="ECO:0000269" key="6">
    <source>
    </source>
</evidence>
<evidence type="ECO:0000269" key="7">
    <source>
    </source>
</evidence>
<evidence type="ECO:0000269" key="8">
    <source>
    </source>
</evidence>
<evidence type="ECO:0000305" key="9"/>
<evidence type="ECO:0000312" key="10">
    <source>
        <dbReference type="EMBL" id="AAH54543.1"/>
    </source>
</evidence>
<evidence type="ECO:0000312" key="11">
    <source>
        <dbReference type="EMBL" id="BAC22110.1"/>
    </source>
</evidence>
<evidence type="ECO:0000312" key="12">
    <source>
        <dbReference type="EMBL" id="CAA90905.1"/>
    </source>
</evidence>
<evidence type="ECO:0007744" key="13">
    <source>
    </source>
</evidence>
<evidence type="ECO:0007744" key="14">
    <source>
    </source>
</evidence>
<accession>P70121</accession>
<accession>Q8BQ68</accession>
<accession>Q8C6T4</accession>
<accession>Q8CJG3</accession>
<gene>
    <name type="primary">Zhx1</name>
</gene>
<keyword id="KW-0238">DNA-binding</keyword>
<keyword id="KW-0371">Homeobox</keyword>
<keyword id="KW-1017">Isopeptide bond</keyword>
<keyword id="KW-0479">Metal-binding</keyword>
<keyword id="KW-0539">Nucleus</keyword>
<keyword id="KW-0597">Phosphoprotein</keyword>
<keyword id="KW-1185">Reference proteome</keyword>
<keyword id="KW-0677">Repeat</keyword>
<keyword id="KW-0678">Repressor</keyword>
<keyword id="KW-0804">Transcription</keyword>
<keyword id="KW-0805">Transcription regulation</keyword>
<keyword id="KW-0832">Ubl conjugation</keyword>
<keyword id="KW-0862">Zinc</keyword>
<keyword id="KW-0863">Zinc-finger</keyword>
<reference evidence="9" key="1">
    <citation type="journal article" date="1996" name="Biochem. Biophys. Res. Commun.">
        <title>zhx-1: a novel mouse homeodomain protein containing two zinc-fingers and five homeodomains.</title>
        <authorList>
            <person name="Barthelemy I."/>
            <person name="Carramolino L."/>
            <person name="Gutierrez J."/>
            <person name="Barbero J.L."/>
            <person name="Marquez G."/>
            <person name="Zaballos A."/>
        </authorList>
    </citation>
    <scope>NUCLEOTIDE SEQUENCE [MRNA]</scope>
    <scope>TISSUE SPECIFICITY</scope>
    <source>
        <tissue evidence="8">Bone marrow stroma</tissue>
    </source>
</reference>
<reference evidence="9" key="2">
    <citation type="journal article" date="2003" name="Gene">
        <title>Genomic structure and analysis of transcriptional regulation of the mouse zinc-fingers and homeoboxes 1 (ZHX1) gene.</title>
        <authorList>
            <person name="Shou Z."/>
            <person name="Yamada K."/>
            <person name="Inazu T."/>
            <person name="Kawata H."/>
            <person name="Hirano S."/>
            <person name="Mizutani T."/>
            <person name="Yazawa T."/>
            <person name="Sekiguchi T."/>
            <person name="Yoshino M."/>
            <person name="Kajitani T."/>
            <person name="Okada K."/>
            <person name="Miyamoto K."/>
        </authorList>
    </citation>
    <scope>NUCLEOTIDE SEQUENCE [GENOMIC DNA]</scope>
    <source>
        <strain evidence="11">129/SvJ</strain>
    </source>
</reference>
<reference key="3">
    <citation type="journal article" date="2005" name="Science">
        <title>The transcriptional landscape of the mammalian genome.</title>
        <authorList>
            <person name="Carninci P."/>
            <person name="Kasukawa T."/>
            <person name="Katayama S."/>
            <person name="Gough J."/>
            <person name="Frith M.C."/>
            <person name="Maeda N."/>
            <person name="Oyama R."/>
            <person name="Ravasi T."/>
            <person name="Lenhard B."/>
            <person name="Wells C."/>
            <person name="Kodzius R."/>
            <person name="Shimokawa K."/>
            <person name="Bajic V.B."/>
            <person name="Brenner S.E."/>
            <person name="Batalov S."/>
            <person name="Forrest A.R."/>
            <person name="Zavolan M."/>
            <person name="Davis M.J."/>
            <person name="Wilming L.G."/>
            <person name="Aidinis V."/>
            <person name="Allen J.E."/>
            <person name="Ambesi-Impiombato A."/>
            <person name="Apweiler R."/>
            <person name="Aturaliya R.N."/>
            <person name="Bailey T.L."/>
            <person name="Bansal M."/>
            <person name="Baxter L."/>
            <person name="Beisel K.W."/>
            <person name="Bersano T."/>
            <person name="Bono H."/>
            <person name="Chalk A.M."/>
            <person name="Chiu K.P."/>
            <person name="Choudhary V."/>
            <person name="Christoffels A."/>
            <person name="Clutterbuck D.R."/>
            <person name="Crowe M.L."/>
            <person name="Dalla E."/>
            <person name="Dalrymple B.P."/>
            <person name="de Bono B."/>
            <person name="Della Gatta G."/>
            <person name="di Bernardo D."/>
            <person name="Down T."/>
            <person name="Engstrom P."/>
            <person name="Fagiolini M."/>
            <person name="Faulkner G."/>
            <person name="Fletcher C.F."/>
            <person name="Fukushima T."/>
            <person name="Furuno M."/>
            <person name="Futaki S."/>
            <person name="Gariboldi M."/>
            <person name="Georgii-Hemming P."/>
            <person name="Gingeras T.R."/>
            <person name="Gojobori T."/>
            <person name="Green R.E."/>
            <person name="Gustincich S."/>
            <person name="Harbers M."/>
            <person name="Hayashi Y."/>
            <person name="Hensch T.K."/>
            <person name="Hirokawa N."/>
            <person name="Hill D."/>
            <person name="Huminiecki L."/>
            <person name="Iacono M."/>
            <person name="Ikeo K."/>
            <person name="Iwama A."/>
            <person name="Ishikawa T."/>
            <person name="Jakt M."/>
            <person name="Kanapin A."/>
            <person name="Katoh M."/>
            <person name="Kawasawa Y."/>
            <person name="Kelso J."/>
            <person name="Kitamura H."/>
            <person name="Kitano H."/>
            <person name="Kollias G."/>
            <person name="Krishnan S.P."/>
            <person name="Kruger A."/>
            <person name="Kummerfeld S.K."/>
            <person name="Kurochkin I.V."/>
            <person name="Lareau L.F."/>
            <person name="Lazarevic D."/>
            <person name="Lipovich L."/>
            <person name="Liu J."/>
            <person name="Liuni S."/>
            <person name="McWilliam S."/>
            <person name="Madan Babu M."/>
            <person name="Madera M."/>
            <person name="Marchionni L."/>
            <person name="Matsuda H."/>
            <person name="Matsuzawa S."/>
            <person name="Miki H."/>
            <person name="Mignone F."/>
            <person name="Miyake S."/>
            <person name="Morris K."/>
            <person name="Mottagui-Tabar S."/>
            <person name="Mulder N."/>
            <person name="Nakano N."/>
            <person name="Nakauchi H."/>
            <person name="Ng P."/>
            <person name="Nilsson R."/>
            <person name="Nishiguchi S."/>
            <person name="Nishikawa S."/>
            <person name="Nori F."/>
            <person name="Ohara O."/>
            <person name="Okazaki Y."/>
            <person name="Orlando V."/>
            <person name="Pang K.C."/>
            <person name="Pavan W.J."/>
            <person name="Pavesi G."/>
            <person name="Pesole G."/>
            <person name="Petrovsky N."/>
            <person name="Piazza S."/>
            <person name="Reed J."/>
            <person name="Reid J.F."/>
            <person name="Ring B.Z."/>
            <person name="Ringwald M."/>
            <person name="Rost B."/>
            <person name="Ruan Y."/>
            <person name="Salzberg S.L."/>
            <person name="Sandelin A."/>
            <person name="Schneider C."/>
            <person name="Schoenbach C."/>
            <person name="Sekiguchi K."/>
            <person name="Semple C.A."/>
            <person name="Seno S."/>
            <person name="Sessa L."/>
            <person name="Sheng Y."/>
            <person name="Shibata Y."/>
            <person name="Shimada H."/>
            <person name="Shimada K."/>
            <person name="Silva D."/>
            <person name="Sinclair B."/>
            <person name="Sperling S."/>
            <person name="Stupka E."/>
            <person name="Sugiura K."/>
            <person name="Sultana R."/>
            <person name="Takenaka Y."/>
            <person name="Taki K."/>
            <person name="Tammoja K."/>
            <person name="Tan S.L."/>
            <person name="Tang S."/>
            <person name="Taylor M.S."/>
            <person name="Tegner J."/>
            <person name="Teichmann S.A."/>
            <person name="Ueda H.R."/>
            <person name="van Nimwegen E."/>
            <person name="Verardo R."/>
            <person name="Wei C.L."/>
            <person name="Yagi K."/>
            <person name="Yamanishi H."/>
            <person name="Zabarovsky E."/>
            <person name="Zhu S."/>
            <person name="Zimmer A."/>
            <person name="Hide W."/>
            <person name="Bult C."/>
            <person name="Grimmond S.M."/>
            <person name="Teasdale R.D."/>
            <person name="Liu E.T."/>
            <person name="Brusic V."/>
            <person name="Quackenbush J."/>
            <person name="Wahlestedt C."/>
            <person name="Mattick J.S."/>
            <person name="Hume D.A."/>
            <person name="Kai C."/>
            <person name="Sasaki D."/>
            <person name="Tomaru Y."/>
            <person name="Fukuda S."/>
            <person name="Kanamori-Katayama M."/>
            <person name="Suzuki M."/>
            <person name="Aoki J."/>
            <person name="Arakawa T."/>
            <person name="Iida J."/>
            <person name="Imamura K."/>
            <person name="Itoh M."/>
            <person name="Kato T."/>
            <person name="Kawaji H."/>
            <person name="Kawagashira N."/>
            <person name="Kawashima T."/>
            <person name="Kojima M."/>
            <person name="Kondo S."/>
            <person name="Konno H."/>
            <person name="Nakano K."/>
            <person name="Ninomiya N."/>
            <person name="Nishio T."/>
            <person name="Okada M."/>
            <person name="Plessy C."/>
            <person name="Shibata K."/>
            <person name="Shiraki T."/>
            <person name="Suzuki S."/>
            <person name="Tagami M."/>
            <person name="Waki K."/>
            <person name="Watahiki A."/>
            <person name="Okamura-Oho Y."/>
            <person name="Suzuki H."/>
            <person name="Kawai J."/>
            <person name="Hayashizaki Y."/>
        </authorList>
    </citation>
    <scope>NUCLEOTIDE SEQUENCE [LARGE SCALE MRNA]</scope>
    <source>
        <strain>C57BL/6J</strain>
        <tissue>Lung</tissue>
        <tissue>Spinal ganglion</tissue>
    </source>
</reference>
<reference evidence="9" key="4">
    <citation type="journal article" date="2004" name="Genome Res.">
        <title>The status, quality, and expansion of the NIH full-length cDNA project: the Mammalian Gene Collection (MGC).</title>
        <authorList>
            <consortium name="The MGC Project Team"/>
        </authorList>
    </citation>
    <scope>NUCLEOTIDE SEQUENCE [LARGE SCALE MRNA]</scope>
    <source>
        <strain evidence="10">C57BL/6J</strain>
        <tissue evidence="10">Brain</tissue>
    </source>
</reference>
<reference evidence="9" key="5">
    <citation type="journal article" date="2004" name="Biochem. Biophys. Res. Commun.">
        <title>A mechanism of induction of the mouse zinc-fingers and homeoboxes 1 (ZHX1) gene expression by interleukin-2.</title>
        <authorList>
            <person name="Shou Z."/>
            <person name="Yamada K."/>
            <person name="Kawata H."/>
            <person name="Yokoyama O."/>
            <person name="Miyamoto K."/>
        </authorList>
    </citation>
    <scope>INDUCTION</scope>
</reference>
<reference key="6">
    <citation type="journal article" date="2006" name="J. Biol. Chem.">
        <title>ZHX proteins regulate podocyte gene expression during the development of nephrotic syndrome.</title>
        <authorList>
            <person name="Liu G."/>
            <person name="Clement L.C."/>
            <person name="Kanwar Y.S."/>
            <person name="Avila-Casado C."/>
            <person name="Chugh S.S."/>
        </authorList>
    </citation>
    <scope>SUBCELLULAR LOCATION</scope>
    <source>
        <tissue>Kidney</tissue>
    </source>
</reference>
<reference key="7">
    <citation type="journal article" date="2007" name="Proc. Natl. Acad. Sci. U.S.A.">
        <title>Large-scale phosphorylation analysis of mouse liver.</title>
        <authorList>
            <person name="Villen J."/>
            <person name="Beausoleil S.A."/>
            <person name="Gerber S.A."/>
            <person name="Gygi S.P."/>
        </authorList>
    </citation>
    <scope>PHOSPHORYLATION [LARGE SCALE ANALYSIS] AT SER-45; SER-47 AND SER-48</scope>
    <scope>IDENTIFICATION BY MASS SPECTROMETRY [LARGE SCALE ANALYSIS]</scope>
    <source>
        <tissue>Liver</tissue>
    </source>
</reference>
<reference key="8">
    <citation type="journal article" date="2010" name="Cell">
        <title>A tissue-specific atlas of mouse protein phosphorylation and expression.</title>
        <authorList>
            <person name="Huttlin E.L."/>
            <person name="Jedrychowski M.P."/>
            <person name="Elias J.E."/>
            <person name="Goswami T."/>
            <person name="Rad R."/>
            <person name="Beausoleil S.A."/>
            <person name="Villen J."/>
            <person name="Haas W."/>
            <person name="Sowa M.E."/>
            <person name="Gygi S.P."/>
        </authorList>
    </citation>
    <scope>PHOSPHORYLATION [LARGE SCALE ANALYSIS] AT SER-47; SER-48 AND SER-648</scope>
    <scope>IDENTIFICATION BY MASS SPECTROMETRY [LARGE SCALE ANALYSIS]</scope>
    <source>
        <tissue>Kidney</tissue>
        <tissue>Lung</tissue>
        <tissue>Spleen</tissue>
    </source>
</reference>
<name>ZHX1_MOUSE</name>